<sequence>MKKGIHPEMKLVTVKCACGAEHTFYTTVDNIRIDVCSKCHPFYTSGGKGGVLIVDTEGRVEKFRRKYGDNY</sequence>
<dbReference type="EMBL" id="CP000969">
    <property type="protein sequence ID" value="ACB09495.1"/>
    <property type="molecule type" value="Genomic_DNA"/>
</dbReference>
<dbReference type="RefSeq" id="WP_008194646.1">
    <property type="nucleotide sequence ID" value="NC_010483.1"/>
</dbReference>
<dbReference type="KEGG" id="trq:TRQ2_1150"/>
<dbReference type="HOGENOM" id="CLU_114306_4_3_0"/>
<dbReference type="Proteomes" id="UP000001687">
    <property type="component" value="Chromosome"/>
</dbReference>
<dbReference type="GO" id="GO:1990904">
    <property type="term" value="C:ribonucleoprotein complex"/>
    <property type="evidence" value="ECO:0007669"/>
    <property type="project" value="UniProtKB-KW"/>
</dbReference>
<dbReference type="GO" id="GO:0005840">
    <property type="term" value="C:ribosome"/>
    <property type="evidence" value="ECO:0007669"/>
    <property type="project" value="UniProtKB-KW"/>
</dbReference>
<dbReference type="GO" id="GO:0046872">
    <property type="term" value="F:metal ion binding"/>
    <property type="evidence" value="ECO:0007669"/>
    <property type="project" value="UniProtKB-KW"/>
</dbReference>
<dbReference type="GO" id="GO:0019843">
    <property type="term" value="F:rRNA binding"/>
    <property type="evidence" value="ECO:0007669"/>
    <property type="project" value="UniProtKB-KW"/>
</dbReference>
<dbReference type="GO" id="GO:0003735">
    <property type="term" value="F:structural constituent of ribosome"/>
    <property type="evidence" value="ECO:0007669"/>
    <property type="project" value="InterPro"/>
</dbReference>
<dbReference type="GO" id="GO:0006412">
    <property type="term" value="P:translation"/>
    <property type="evidence" value="ECO:0007669"/>
    <property type="project" value="UniProtKB-UniRule"/>
</dbReference>
<dbReference type="Gene3D" id="4.10.830.30">
    <property type="entry name" value="Ribosomal protein L31"/>
    <property type="match status" value="1"/>
</dbReference>
<dbReference type="HAMAP" id="MF_00501">
    <property type="entry name" value="Ribosomal_bL31_1"/>
    <property type="match status" value="1"/>
</dbReference>
<dbReference type="InterPro" id="IPR034704">
    <property type="entry name" value="Ribosomal_bL28/bL31-like_sf"/>
</dbReference>
<dbReference type="InterPro" id="IPR002150">
    <property type="entry name" value="Ribosomal_bL31"/>
</dbReference>
<dbReference type="InterPro" id="IPR027491">
    <property type="entry name" value="Ribosomal_bL31_A"/>
</dbReference>
<dbReference type="InterPro" id="IPR042105">
    <property type="entry name" value="Ribosomal_bL31_sf"/>
</dbReference>
<dbReference type="NCBIfam" id="TIGR00105">
    <property type="entry name" value="L31"/>
    <property type="match status" value="1"/>
</dbReference>
<dbReference type="NCBIfam" id="NF000612">
    <property type="entry name" value="PRK00019.1"/>
    <property type="match status" value="1"/>
</dbReference>
<dbReference type="PANTHER" id="PTHR33280">
    <property type="entry name" value="50S RIBOSOMAL PROTEIN L31, CHLOROPLASTIC"/>
    <property type="match status" value="1"/>
</dbReference>
<dbReference type="PANTHER" id="PTHR33280:SF1">
    <property type="entry name" value="LARGE RIBOSOMAL SUBUNIT PROTEIN BL31C"/>
    <property type="match status" value="1"/>
</dbReference>
<dbReference type="Pfam" id="PF01197">
    <property type="entry name" value="Ribosomal_L31"/>
    <property type="match status" value="1"/>
</dbReference>
<dbReference type="PRINTS" id="PR01249">
    <property type="entry name" value="RIBOSOMALL31"/>
</dbReference>
<dbReference type="SUPFAM" id="SSF143800">
    <property type="entry name" value="L28p-like"/>
    <property type="match status" value="1"/>
</dbReference>
<dbReference type="PROSITE" id="PS01143">
    <property type="entry name" value="RIBOSOMAL_L31"/>
    <property type="match status" value="1"/>
</dbReference>
<feature type="chain" id="PRO_1000126759" description="Large ribosomal subunit protein bL31">
    <location>
        <begin position="1"/>
        <end position="71"/>
    </location>
</feature>
<feature type="binding site" evidence="1">
    <location>
        <position position="16"/>
    </location>
    <ligand>
        <name>Zn(2+)</name>
        <dbReference type="ChEBI" id="CHEBI:29105"/>
    </ligand>
</feature>
<feature type="binding site" evidence="1">
    <location>
        <position position="18"/>
    </location>
    <ligand>
        <name>Zn(2+)</name>
        <dbReference type="ChEBI" id="CHEBI:29105"/>
    </ligand>
</feature>
<feature type="binding site" evidence="1">
    <location>
        <position position="36"/>
    </location>
    <ligand>
        <name>Zn(2+)</name>
        <dbReference type="ChEBI" id="CHEBI:29105"/>
    </ligand>
</feature>
<feature type="binding site" evidence="1">
    <location>
        <position position="39"/>
    </location>
    <ligand>
        <name>Zn(2+)</name>
        <dbReference type="ChEBI" id="CHEBI:29105"/>
    </ligand>
</feature>
<organism>
    <name type="scientific">Thermotoga sp. (strain RQ2)</name>
    <dbReference type="NCBI Taxonomy" id="126740"/>
    <lineage>
        <taxon>Bacteria</taxon>
        <taxon>Thermotogati</taxon>
        <taxon>Thermotogota</taxon>
        <taxon>Thermotogae</taxon>
        <taxon>Thermotogales</taxon>
        <taxon>Thermotogaceae</taxon>
        <taxon>Thermotoga</taxon>
    </lineage>
</organism>
<reference key="1">
    <citation type="journal article" date="2011" name="J. Bacteriol.">
        <title>Genome sequence of Thermotoga sp. strain RQ2, a hyperthermophilic bacterium isolated from a geothermally heated region of the seafloor near Ribeira Quente, the Azores.</title>
        <authorList>
            <person name="Swithers K.S."/>
            <person name="DiPippo J.L."/>
            <person name="Bruce D.C."/>
            <person name="Detter C."/>
            <person name="Tapia R."/>
            <person name="Han S."/>
            <person name="Saunders E."/>
            <person name="Goodwin L.A."/>
            <person name="Han J."/>
            <person name="Woyke T."/>
            <person name="Pitluck S."/>
            <person name="Pennacchio L."/>
            <person name="Nolan M."/>
            <person name="Mikhailova N."/>
            <person name="Lykidis A."/>
            <person name="Land M.L."/>
            <person name="Brettin T."/>
            <person name="Stetter K.O."/>
            <person name="Nelson K.E."/>
            <person name="Gogarten J.P."/>
            <person name="Noll K.M."/>
        </authorList>
    </citation>
    <scope>NUCLEOTIDE SEQUENCE [LARGE SCALE GENOMIC DNA]</scope>
    <source>
        <strain>RQ2</strain>
    </source>
</reference>
<name>RL31_THESQ</name>
<gene>
    <name evidence="1" type="primary">rpmE</name>
    <name type="ordered locus">TRQ2_1150</name>
</gene>
<evidence type="ECO:0000255" key="1">
    <source>
        <dbReference type="HAMAP-Rule" id="MF_00501"/>
    </source>
</evidence>
<evidence type="ECO:0000305" key="2"/>
<protein>
    <recommendedName>
        <fullName evidence="1">Large ribosomal subunit protein bL31</fullName>
    </recommendedName>
    <alternativeName>
        <fullName evidence="2">50S ribosomal protein L31</fullName>
    </alternativeName>
</protein>
<comment type="function">
    <text evidence="1">Binds the 23S rRNA.</text>
</comment>
<comment type="cofactor">
    <cofactor evidence="1">
        <name>Zn(2+)</name>
        <dbReference type="ChEBI" id="CHEBI:29105"/>
    </cofactor>
    <text evidence="1">Binds 1 zinc ion per subunit.</text>
</comment>
<comment type="subunit">
    <text evidence="1">Part of the 50S ribosomal subunit.</text>
</comment>
<comment type="similarity">
    <text evidence="1">Belongs to the bacterial ribosomal protein bL31 family. Type A subfamily.</text>
</comment>
<accession>B1LAZ7</accession>
<keyword id="KW-0479">Metal-binding</keyword>
<keyword id="KW-0687">Ribonucleoprotein</keyword>
<keyword id="KW-0689">Ribosomal protein</keyword>
<keyword id="KW-0694">RNA-binding</keyword>
<keyword id="KW-0699">rRNA-binding</keyword>
<keyword id="KW-0862">Zinc</keyword>
<proteinExistence type="inferred from homology"/>